<reference key="1">
    <citation type="journal article" date="2005" name="Nucleic Acids Res.">
        <title>The genome sequence of Salmonella enterica serovar Choleraesuis, a highly invasive and resistant zoonotic pathogen.</title>
        <authorList>
            <person name="Chiu C.-H."/>
            <person name="Tang P."/>
            <person name="Chu C."/>
            <person name="Hu S."/>
            <person name="Bao Q."/>
            <person name="Yu J."/>
            <person name="Chou Y.-Y."/>
            <person name="Wang H.-S."/>
            <person name="Lee Y.-S."/>
        </authorList>
    </citation>
    <scope>NUCLEOTIDE SEQUENCE [LARGE SCALE GENOMIC DNA]</scope>
    <source>
        <strain>SC-B67</strain>
    </source>
</reference>
<gene>
    <name evidence="1" type="primary">lldD</name>
    <name type="ordered locus">SCH_3618</name>
</gene>
<keyword id="KW-0997">Cell inner membrane</keyword>
<keyword id="KW-1003">Cell membrane</keyword>
<keyword id="KW-0285">Flavoprotein</keyword>
<keyword id="KW-0288">FMN</keyword>
<keyword id="KW-0472">Membrane</keyword>
<keyword id="KW-0560">Oxidoreductase</keyword>
<comment type="function">
    <text evidence="1">Catalyzes the conversion of L-lactate to pyruvate. Is coupled to the respiratory chain.</text>
</comment>
<comment type="catalytic activity">
    <reaction evidence="1">
        <text>(S)-lactate + A = pyruvate + AH2</text>
        <dbReference type="Rhea" id="RHEA:45816"/>
        <dbReference type="ChEBI" id="CHEBI:13193"/>
        <dbReference type="ChEBI" id="CHEBI:15361"/>
        <dbReference type="ChEBI" id="CHEBI:16651"/>
        <dbReference type="ChEBI" id="CHEBI:17499"/>
    </reaction>
</comment>
<comment type="cofactor">
    <cofactor evidence="1">
        <name>FMN</name>
        <dbReference type="ChEBI" id="CHEBI:58210"/>
    </cofactor>
</comment>
<comment type="subcellular location">
    <subcellularLocation>
        <location evidence="1">Cell inner membrane</location>
        <topology evidence="1">Peripheral membrane protein</topology>
    </subcellularLocation>
</comment>
<comment type="similarity">
    <text evidence="1">Belongs to the FMN-dependent alpha-hydroxy acid dehydrogenase family.</text>
</comment>
<accession>Q57ID8</accession>
<feature type="chain" id="PRO_0000206344" description="L-lactate dehydrogenase">
    <location>
        <begin position="1"/>
        <end position="396"/>
    </location>
</feature>
<feature type="domain" description="FMN hydroxy acid dehydrogenase" evidence="1">
    <location>
        <begin position="1"/>
        <end position="380"/>
    </location>
</feature>
<feature type="active site" description="Proton acceptor" evidence="1">
    <location>
        <position position="275"/>
    </location>
</feature>
<feature type="binding site" evidence="1">
    <location>
        <position position="24"/>
    </location>
    <ligand>
        <name>substrate</name>
    </ligand>
</feature>
<feature type="binding site" evidence="1">
    <location>
        <position position="106"/>
    </location>
    <ligand>
        <name>FMN</name>
        <dbReference type="ChEBI" id="CHEBI:58210"/>
    </ligand>
</feature>
<feature type="binding site" evidence="1">
    <location>
        <position position="127"/>
    </location>
    <ligand>
        <name>FMN</name>
        <dbReference type="ChEBI" id="CHEBI:58210"/>
    </ligand>
</feature>
<feature type="binding site" evidence="1">
    <location>
        <position position="129"/>
    </location>
    <ligand>
        <name>substrate</name>
    </ligand>
</feature>
<feature type="binding site" evidence="1">
    <location>
        <position position="155"/>
    </location>
    <ligand>
        <name>FMN</name>
        <dbReference type="ChEBI" id="CHEBI:58210"/>
    </ligand>
</feature>
<feature type="binding site" evidence="1">
    <location>
        <position position="164"/>
    </location>
    <ligand>
        <name>substrate</name>
    </ligand>
</feature>
<feature type="binding site" evidence="1">
    <location>
        <position position="251"/>
    </location>
    <ligand>
        <name>FMN</name>
        <dbReference type="ChEBI" id="CHEBI:58210"/>
    </ligand>
</feature>
<feature type="binding site" evidence="1">
    <location>
        <position position="278"/>
    </location>
    <ligand>
        <name>substrate</name>
    </ligand>
</feature>
<feature type="binding site" evidence="1">
    <location>
        <begin position="306"/>
        <end position="330"/>
    </location>
    <ligand>
        <name>FMN</name>
        <dbReference type="ChEBI" id="CHEBI:58210"/>
    </ligand>
</feature>
<name>LLDD_SALCH</name>
<evidence type="ECO:0000255" key="1">
    <source>
        <dbReference type="HAMAP-Rule" id="MF_01559"/>
    </source>
</evidence>
<protein>
    <recommendedName>
        <fullName evidence="1">L-lactate dehydrogenase</fullName>
        <ecNumber evidence="1">1.1.-.-</ecNumber>
    </recommendedName>
</protein>
<proteinExistence type="inferred from homology"/>
<sequence length="396" mass="42695">MIISAASDYRAAAQRTLPPFLFHYIDGGAYAEYTLRRNVEDLSQVALRQRVLKNMSDLSLETTLFNETLPMPVALAPVGLCGMYARRGEVQAAAAADAKGIPFTLSTVSVCPIEEVAPTIQRPMWFQLYVLRDRGFMRNALERAKAAGCSTLVFTVDMPTPGARYRDAHSGMSGPNAAMLRYWQAVMHPKWAWDVGLNGRPHDLGNISAYLGKPTGLEDYIGWLANNFDPSISWKDLEWIREFWDGPMVIKGILDPEDARDAVRFGADGIVVSNHGGRQLDGVLSSARALPAIADAVKGDIAILADSGIRNGLDVVRMIALGADTVLLGRAYLYALATAGKAGVANLLDLIEKEMKVAMTLTGAKTISEISGDSLVQELGKSLPAALAPMSKGDAA</sequence>
<dbReference type="EC" id="1.1.-.-" evidence="1"/>
<dbReference type="EMBL" id="AE017220">
    <property type="protein sequence ID" value="AAX67524.1"/>
    <property type="molecule type" value="Genomic_DNA"/>
</dbReference>
<dbReference type="RefSeq" id="WP_001541116.1">
    <property type="nucleotide sequence ID" value="NC_006905.1"/>
</dbReference>
<dbReference type="SMR" id="Q57ID8"/>
<dbReference type="KEGG" id="sec:SCH_3618"/>
<dbReference type="HOGENOM" id="CLU_020639_0_0_6"/>
<dbReference type="Proteomes" id="UP000000538">
    <property type="component" value="Chromosome"/>
</dbReference>
<dbReference type="GO" id="GO:0005886">
    <property type="term" value="C:plasma membrane"/>
    <property type="evidence" value="ECO:0007669"/>
    <property type="project" value="UniProtKB-SubCell"/>
</dbReference>
<dbReference type="GO" id="GO:0010181">
    <property type="term" value="F:FMN binding"/>
    <property type="evidence" value="ECO:0007669"/>
    <property type="project" value="InterPro"/>
</dbReference>
<dbReference type="GO" id="GO:0004459">
    <property type="term" value="F:L-lactate dehydrogenase activity"/>
    <property type="evidence" value="ECO:0007669"/>
    <property type="project" value="UniProtKB-UniRule"/>
</dbReference>
<dbReference type="GO" id="GO:0009060">
    <property type="term" value="P:aerobic respiration"/>
    <property type="evidence" value="ECO:0007669"/>
    <property type="project" value="TreeGrafter"/>
</dbReference>
<dbReference type="GO" id="GO:0006089">
    <property type="term" value="P:lactate metabolic process"/>
    <property type="evidence" value="ECO:0007669"/>
    <property type="project" value="UniProtKB-UniRule"/>
</dbReference>
<dbReference type="CDD" id="cd02809">
    <property type="entry name" value="alpha_hydroxyacid_oxid_FMN"/>
    <property type="match status" value="1"/>
</dbReference>
<dbReference type="FunFam" id="3.20.20.70:FF:000029">
    <property type="entry name" value="L-lactate dehydrogenase"/>
    <property type="match status" value="1"/>
</dbReference>
<dbReference type="Gene3D" id="3.20.20.70">
    <property type="entry name" value="Aldolase class I"/>
    <property type="match status" value="1"/>
</dbReference>
<dbReference type="HAMAP" id="MF_01559">
    <property type="entry name" value="L_lact_dehydr"/>
    <property type="match status" value="1"/>
</dbReference>
<dbReference type="InterPro" id="IPR013785">
    <property type="entry name" value="Aldolase_TIM"/>
</dbReference>
<dbReference type="InterPro" id="IPR012133">
    <property type="entry name" value="Alpha-hydoxy_acid_DH_FMN"/>
</dbReference>
<dbReference type="InterPro" id="IPR000262">
    <property type="entry name" value="FMN-dep_DH"/>
</dbReference>
<dbReference type="InterPro" id="IPR037396">
    <property type="entry name" value="FMN_HAD"/>
</dbReference>
<dbReference type="InterPro" id="IPR008259">
    <property type="entry name" value="FMN_hydac_DH_AS"/>
</dbReference>
<dbReference type="InterPro" id="IPR020920">
    <property type="entry name" value="LldD"/>
</dbReference>
<dbReference type="NCBIfam" id="NF033901">
    <property type="entry name" value="L_lactate_LldD"/>
    <property type="match status" value="1"/>
</dbReference>
<dbReference type="NCBIfam" id="NF008398">
    <property type="entry name" value="PRK11197.1"/>
    <property type="match status" value="1"/>
</dbReference>
<dbReference type="PANTHER" id="PTHR10578:SF85">
    <property type="entry name" value="L-LACTATE DEHYDROGENASE"/>
    <property type="match status" value="1"/>
</dbReference>
<dbReference type="PANTHER" id="PTHR10578">
    <property type="entry name" value="S -2-HYDROXY-ACID OXIDASE-RELATED"/>
    <property type="match status" value="1"/>
</dbReference>
<dbReference type="Pfam" id="PF01070">
    <property type="entry name" value="FMN_dh"/>
    <property type="match status" value="1"/>
</dbReference>
<dbReference type="PIRSF" id="PIRSF000138">
    <property type="entry name" value="Al-hdrx_acd_dh"/>
    <property type="match status" value="1"/>
</dbReference>
<dbReference type="SUPFAM" id="SSF51395">
    <property type="entry name" value="FMN-linked oxidoreductases"/>
    <property type="match status" value="1"/>
</dbReference>
<dbReference type="PROSITE" id="PS00557">
    <property type="entry name" value="FMN_HYDROXY_ACID_DH_1"/>
    <property type="match status" value="1"/>
</dbReference>
<dbReference type="PROSITE" id="PS51349">
    <property type="entry name" value="FMN_HYDROXY_ACID_DH_2"/>
    <property type="match status" value="1"/>
</dbReference>
<organism>
    <name type="scientific">Salmonella choleraesuis (strain SC-B67)</name>
    <dbReference type="NCBI Taxonomy" id="321314"/>
    <lineage>
        <taxon>Bacteria</taxon>
        <taxon>Pseudomonadati</taxon>
        <taxon>Pseudomonadota</taxon>
        <taxon>Gammaproteobacteria</taxon>
        <taxon>Enterobacterales</taxon>
        <taxon>Enterobacteriaceae</taxon>
        <taxon>Salmonella</taxon>
    </lineage>
</organism>